<keyword id="KW-0010">Activator</keyword>
<keyword id="KW-0013">ADP-ribosylation</keyword>
<keyword id="KW-0090">Biological rhythms</keyword>
<keyword id="KW-0131">Cell cycle</keyword>
<keyword id="KW-0963">Cytoplasm</keyword>
<keyword id="KW-0238">DNA-binding</keyword>
<keyword id="KW-0539">Nucleus</keyword>
<keyword id="KW-0675">Receptor</keyword>
<keyword id="KW-1185">Reference proteome</keyword>
<keyword id="KW-0677">Repeat</keyword>
<keyword id="KW-0678">Repressor</keyword>
<keyword id="KW-0804">Transcription</keyword>
<keyword id="KW-0805">Transcription regulation</keyword>
<gene>
    <name type="primary">Ahr</name>
</gene>
<comment type="function">
    <text evidence="2">Ligand-activated transcription factor that enables cells to adapt to changing conditions by sensing compounds from the environment, diet, microbiome and cellular metabolism, and which plays important roles in development, immunity and cancer. Upon ligand binding, translocates into the nucleus, where it heterodimerizes with ARNT and induces transcription by binding to xenobiotic response elements (XRE). Regulates a variety of biological processes, including angiogenesis, hematopoiesis, drug and lipid metabolism, cell motility and immune modulation. Xenobiotics can act as ligands: upon xenobiotic-binding, activates the expression of multiple phase I and II xenobiotic chemical metabolizing enzyme genes (such as the CYP1A1 gene). Mediates biochemical and toxic effects of halogenated aromatic hydrocarbons. Next to xenobiotics, natural ligands derived from plants, microbiota, and endogenous metabolism are potent AHR agonists. Tryptophan (Trp) derivatives constitute an important class of endogenous AHR ligands. Acts as a negative regulator of anti-tumor immunity: indoles and kynurenic acid generated by Trp catabolism act as ligand and activate AHR, thereby promoting AHR-driven cancer cell motility and suppressing adaptive immunity. Regulates the circadian clock by inhibiting the basal and circadian expression of the core circadian component PER1. Inhibits PER1 by repressing the CLOCK-BMAL1 heterodimer mediated transcriptional activation of PER1. The heterodimer ARNT:AHR binds to core DNA sequence 5'-TGCGTG-3' within the dioxin response element (DRE) of target gene promoters and activates their transcription.</text>
</comment>
<comment type="subunit">
    <text evidence="1 2">Homodimer (By similarity). Heterodimer; efficient DNA binding requires dimerization with another bHLH protein. Interacts with ARNT; the heterodimer ARNT:AHR binds to core DNA sequence 5'-TGCGTG-3' within the dioxin response element (DRE) of target gene promoters and activates their transcription (By similarity). Binds MYBBP1A (By similarity). Interacts with coactivators including SRC-1, RIP140 and NOCA7, and with the corepressor SMRT. Interacts with NEDD8 and IVNS1ABP (By similarity). Interacts with BMAL1. Interacts with HSP90AB1 (By similarity). Interacts with TIPARP; leading to mono-ADP-ribosylation of AHR and subsequent inhibition of AHR (By similarity).</text>
</comment>
<comment type="subcellular location">
    <subcellularLocation>
        <location evidence="1">Cytoplasm</location>
    </subcellularLocation>
    <subcellularLocation>
        <location evidence="1">Nucleus</location>
    </subcellularLocation>
    <text evidence="1">Initially cytoplasmic; upon binding with ligand and interaction with a HSP90, it translocates to the nucleus.</text>
</comment>
<comment type="domain">
    <text evidence="1">The PAS 1 domain is essential for dimerization and also required for AHR:ARNT heterodimerization.</text>
</comment>
<comment type="PTM">
    <text evidence="2">Mono-ADP-ribosylated, leading to inhibit transcription activator activity of AHR.</text>
</comment>
<evidence type="ECO:0000250" key="1">
    <source>
        <dbReference type="UniProtKB" id="P30561"/>
    </source>
</evidence>
<evidence type="ECO:0000250" key="2">
    <source>
        <dbReference type="UniProtKB" id="P35869"/>
    </source>
</evidence>
<evidence type="ECO:0000255" key="3">
    <source>
        <dbReference type="PROSITE-ProRule" id="PRU00140"/>
    </source>
</evidence>
<evidence type="ECO:0000255" key="4">
    <source>
        <dbReference type="PROSITE-ProRule" id="PRU00981"/>
    </source>
</evidence>
<evidence type="ECO:0000256" key="5">
    <source>
        <dbReference type="SAM" id="MobiDB-lite"/>
    </source>
</evidence>
<evidence type="ECO:0000305" key="6"/>
<evidence type="ECO:0000312" key="7">
    <source>
        <dbReference type="EMBL" id="AAL89734.1"/>
    </source>
</evidence>
<dbReference type="EMBL" id="AF405569">
    <property type="protein sequence ID" value="AAL89734.1"/>
    <property type="molecule type" value="mRNA"/>
</dbReference>
<dbReference type="SMR" id="Q8R4S4"/>
<dbReference type="Ensembl" id="ENSMSIT00000009952.1">
    <property type="protein sequence ID" value="ENSMSIP00000007812.1"/>
    <property type="gene ID" value="ENSMSIG00000006956.1"/>
</dbReference>
<dbReference type="MGI" id="MGI:105043">
    <property type="gene designation" value="Ahr"/>
</dbReference>
<dbReference type="GeneTree" id="ENSGT00940000154486"/>
<dbReference type="Proteomes" id="UP000694415">
    <property type="component" value="Unplaced"/>
</dbReference>
<dbReference type="GO" id="GO:0005737">
    <property type="term" value="C:cytoplasm"/>
    <property type="evidence" value="ECO:0000250"/>
    <property type="project" value="UniProtKB"/>
</dbReference>
<dbReference type="GO" id="GO:0005829">
    <property type="term" value="C:cytosol"/>
    <property type="evidence" value="ECO:0007669"/>
    <property type="project" value="Ensembl"/>
</dbReference>
<dbReference type="GO" id="GO:0034753">
    <property type="term" value="C:nuclear aryl hydrocarbon receptor complex"/>
    <property type="evidence" value="ECO:0000250"/>
    <property type="project" value="UniProtKB"/>
</dbReference>
<dbReference type="GO" id="GO:0005634">
    <property type="term" value="C:nucleus"/>
    <property type="evidence" value="ECO:0000314"/>
    <property type="project" value="UniProt"/>
</dbReference>
<dbReference type="GO" id="GO:0070888">
    <property type="term" value="F:E-box binding"/>
    <property type="evidence" value="ECO:0000250"/>
    <property type="project" value="UniProtKB"/>
</dbReference>
<dbReference type="GO" id="GO:0051879">
    <property type="term" value="F:Hsp90 protein binding"/>
    <property type="evidence" value="ECO:0007669"/>
    <property type="project" value="Ensembl"/>
</dbReference>
<dbReference type="GO" id="GO:0004879">
    <property type="term" value="F:nuclear receptor activity"/>
    <property type="evidence" value="ECO:0000314"/>
    <property type="project" value="UniProt"/>
</dbReference>
<dbReference type="GO" id="GO:0046982">
    <property type="term" value="F:protein heterodimerization activity"/>
    <property type="evidence" value="ECO:0000250"/>
    <property type="project" value="UniProtKB"/>
</dbReference>
<dbReference type="GO" id="GO:0042803">
    <property type="term" value="F:protein homodimerization activity"/>
    <property type="evidence" value="ECO:0000250"/>
    <property type="project" value="UniProtKB"/>
</dbReference>
<dbReference type="GO" id="GO:0061629">
    <property type="term" value="F:RNA polymerase II-specific DNA-binding transcription factor binding"/>
    <property type="evidence" value="ECO:0007669"/>
    <property type="project" value="Ensembl"/>
</dbReference>
<dbReference type="GO" id="GO:1990837">
    <property type="term" value="F:sequence-specific double-stranded DNA binding"/>
    <property type="evidence" value="ECO:0000250"/>
    <property type="project" value="UniProtKB"/>
</dbReference>
<dbReference type="GO" id="GO:0017025">
    <property type="term" value="F:TBP-class protein binding"/>
    <property type="evidence" value="ECO:0007669"/>
    <property type="project" value="Ensembl"/>
</dbReference>
<dbReference type="GO" id="GO:0001094">
    <property type="term" value="F:TFIID-class transcription factor complex binding"/>
    <property type="evidence" value="ECO:0007669"/>
    <property type="project" value="Ensembl"/>
</dbReference>
<dbReference type="GO" id="GO:0001223">
    <property type="term" value="F:transcription coactivator binding"/>
    <property type="evidence" value="ECO:0007669"/>
    <property type="project" value="Ensembl"/>
</dbReference>
<dbReference type="GO" id="GO:1904613">
    <property type="term" value="P:cellular response to 2,3,7,8-tetrachlorodibenzodioxine"/>
    <property type="evidence" value="ECO:0000314"/>
    <property type="project" value="UniProt"/>
</dbReference>
<dbReference type="GO" id="GO:1904682">
    <property type="term" value="P:cellular response to 3-methylcholanthrene"/>
    <property type="evidence" value="ECO:0000250"/>
    <property type="project" value="UniProtKB"/>
</dbReference>
<dbReference type="GO" id="GO:0071320">
    <property type="term" value="P:cellular response to cAMP"/>
    <property type="evidence" value="ECO:0007669"/>
    <property type="project" value="Ensembl"/>
</dbReference>
<dbReference type="GO" id="GO:1904322">
    <property type="term" value="P:cellular response to forskolin"/>
    <property type="evidence" value="ECO:0007669"/>
    <property type="project" value="Ensembl"/>
</dbReference>
<dbReference type="GO" id="GO:0071219">
    <property type="term" value="P:cellular response to molecule of bacterial origin"/>
    <property type="evidence" value="ECO:0007669"/>
    <property type="project" value="Ensembl"/>
</dbReference>
<dbReference type="GO" id="GO:0032922">
    <property type="term" value="P:circadian regulation of gene expression"/>
    <property type="evidence" value="ECO:0000250"/>
    <property type="project" value="UniProtKB"/>
</dbReference>
<dbReference type="GO" id="GO:0045892">
    <property type="term" value="P:negative regulation of DNA-templated transcription"/>
    <property type="evidence" value="ECO:0000250"/>
    <property type="project" value="UniProtKB"/>
</dbReference>
<dbReference type="GO" id="GO:0050728">
    <property type="term" value="P:negative regulation of inflammatory response"/>
    <property type="evidence" value="ECO:0007669"/>
    <property type="project" value="Ensembl"/>
</dbReference>
<dbReference type="GO" id="GO:0002841">
    <property type="term" value="P:negative regulation of T cell mediated immune response to tumor cell"/>
    <property type="evidence" value="ECO:0000250"/>
    <property type="project" value="UniProtKB"/>
</dbReference>
<dbReference type="GO" id="GO:0045893">
    <property type="term" value="P:positive regulation of DNA-templated transcription"/>
    <property type="evidence" value="ECO:0000250"/>
    <property type="project" value="UniProtKB"/>
</dbReference>
<dbReference type="GO" id="GO:0045944">
    <property type="term" value="P:positive regulation of transcription by RNA polymerase II"/>
    <property type="evidence" value="ECO:0000250"/>
    <property type="project" value="UniProtKB"/>
</dbReference>
<dbReference type="GO" id="GO:0002819">
    <property type="term" value="P:regulation of adaptive immune response"/>
    <property type="evidence" value="ECO:0000250"/>
    <property type="project" value="UniProtKB"/>
</dbReference>
<dbReference type="GO" id="GO:0030888">
    <property type="term" value="P:regulation of B cell proliferation"/>
    <property type="evidence" value="ECO:0007669"/>
    <property type="project" value="Ensembl"/>
</dbReference>
<dbReference type="GO" id="GO:0006355">
    <property type="term" value="P:regulation of DNA-templated transcription"/>
    <property type="evidence" value="ECO:0000250"/>
    <property type="project" value="UniProtKB"/>
</dbReference>
<dbReference type="GO" id="GO:0009636">
    <property type="term" value="P:response to toxic substance"/>
    <property type="evidence" value="ECO:0007669"/>
    <property type="project" value="Ensembl"/>
</dbReference>
<dbReference type="GO" id="GO:0009410">
    <property type="term" value="P:response to xenobiotic stimulus"/>
    <property type="evidence" value="ECO:0000250"/>
    <property type="project" value="UniProtKB"/>
</dbReference>
<dbReference type="GO" id="GO:0006366">
    <property type="term" value="P:transcription by RNA polymerase II"/>
    <property type="evidence" value="ECO:0000250"/>
    <property type="project" value="UniProtKB"/>
</dbReference>
<dbReference type="GO" id="GO:0006805">
    <property type="term" value="P:xenobiotic metabolic process"/>
    <property type="evidence" value="ECO:0007669"/>
    <property type="project" value="InterPro"/>
</dbReference>
<dbReference type="CDD" id="cd11436">
    <property type="entry name" value="bHLH-PAS_AhR"/>
    <property type="match status" value="1"/>
</dbReference>
<dbReference type="CDD" id="cd00130">
    <property type="entry name" value="PAS"/>
    <property type="match status" value="2"/>
</dbReference>
<dbReference type="FunFam" id="3.30.450.20:FF:000035">
    <property type="entry name" value="Aryl hydrocarbon receptor"/>
    <property type="match status" value="1"/>
</dbReference>
<dbReference type="FunFam" id="3.30.450.20:FF:000019">
    <property type="entry name" value="Aryl hydrocarbon receptor 1"/>
    <property type="match status" value="1"/>
</dbReference>
<dbReference type="FunFam" id="4.10.280.10:FF:000024">
    <property type="entry name" value="Aryl hydrocarbon receptor 2"/>
    <property type="match status" value="1"/>
</dbReference>
<dbReference type="Gene3D" id="4.10.280.10">
    <property type="entry name" value="Helix-loop-helix DNA-binding domain"/>
    <property type="match status" value="1"/>
</dbReference>
<dbReference type="Gene3D" id="3.30.450.20">
    <property type="entry name" value="PAS domain"/>
    <property type="match status" value="2"/>
</dbReference>
<dbReference type="InterPro" id="IPR039091">
    <property type="entry name" value="AHR/AHRR"/>
</dbReference>
<dbReference type="InterPro" id="IPR033348">
    <property type="entry name" value="AHR_bHLH"/>
</dbReference>
<dbReference type="InterPro" id="IPR011598">
    <property type="entry name" value="bHLH_dom"/>
</dbReference>
<dbReference type="InterPro" id="IPR036638">
    <property type="entry name" value="HLH_DNA-bd_sf"/>
</dbReference>
<dbReference type="InterPro" id="IPR001610">
    <property type="entry name" value="PAC"/>
</dbReference>
<dbReference type="InterPro" id="IPR000014">
    <property type="entry name" value="PAS"/>
</dbReference>
<dbReference type="InterPro" id="IPR035965">
    <property type="entry name" value="PAS-like_dom_sf"/>
</dbReference>
<dbReference type="InterPro" id="IPR013767">
    <property type="entry name" value="PAS_fold"/>
</dbReference>
<dbReference type="InterPro" id="IPR013655">
    <property type="entry name" value="PAS_fold_3"/>
</dbReference>
<dbReference type="PANTHER" id="PTHR10649">
    <property type="entry name" value="ARYL HYDROCARBON RECEPTOR"/>
    <property type="match status" value="1"/>
</dbReference>
<dbReference type="PANTHER" id="PTHR10649:SF9">
    <property type="entry name" value="ARYL HYDROCARBON RECEPTOR"/>
    <property type="match status" value="1"/>
</dbReference>
<dbReference type="Pfam" id="PF00010">
    <property type="entry name" value="HLH"/>
    <property type="match status" value="1"/>
</dbReference>
<dbReference type="Pfam" id="PF00989">
    <property type="entry name" value="PAS"/>
    <property type="match status" value="1"/>
</dbReference>
<dbReference type="Pfam" id="PF08447">
    <property type="entry name" value="PAS_3"/>
    <property type="match status" value="1"/>
</dbReference>
<dbReference type="SMART" id="SM00353">
    <property type="entry name" value="HLH"/>
    <property type="match status" value="1"/>
</dbReference>
<dbReference type="SMART" id="SM00086">
    <property type="entry name" value="PAC"/>
    <property type="match status" value="1"/>
</dbReference>
<dbReference type="SMART" id="SM00091">
    <property type="entry name" value="PAS"/>
    <property type="match status" value="2"/>
</dbReference>
<dbReference type="SUPFAM" id="SSF47459">
    <property type="entry name" value="HLH, helix-loop-helix DNA-binding domain"/>
    <property type="match status" value="1"/>
</dbReference>
<dbReference type="SUPFAM" id="SSF55785">
    <property type="entry name" value="PYP-like sensor domain (PAS domain)"/>
    <property type="match status" value="2"/>
</dbReference>
<dbReference type="PROSITE" id="PS50888">
    <property type="entry name" value="BHLH"/>
    <property type="match status" value="1"/>
</dbReference>
<dbReference type="PROSITE" id="PS50112">
    <property type="entry name" value="PAS"/>
    <property type="match status" value="1"/>
</dbReference>
<protein>
    <recommendedName>
        <fullName>Aryl hydrocarbon receptor</fullName>
        <shortName>Ah receptor</shortName>
        <shortName>AhR</shortName>
    </recommendedName>
</protein>
<organism evidence="7">
    <name type="scientific">Mus spicilegus</name>
    <name type="common">Steppe mouse</name>
    <dbReference type="NCBI Taxonomy" id="10103"/>
    <lineage>
        <taxon>Eukaryota</taxon>
        <taxon>Metazoa</taxon>
        <taxon>Chordata</taxon>
        <taxon>Craniata</taxon>
        <taxon>Vertebrata</taxon>
        <taxon>Euteleostomi</taxon>
        <taxon>Mammalia</taxon>
        <taxon>Eutheria</taxon>
        <taxon>Euarchontoglires</taxon>
        <taxon>Glires</taxon>
        <taxon>Rodentia</taxon>
        <taxon>Myomorpha</taxon>
        <taxon>Muroidea</taxon>
        <taxon>Muridae</taxon>
        <taxon>Murinae</taxon>
        <taxon>Mus</taxon>
        <taxon>Mus</taxon>
    </lineage>
</organism>
<feature type="propeptide" id="PRO_0000013460" evidence="1">
    <location>
        <begin position="1"/>
        <end position="9"/>
    </location>
</feature>
<feature type="chain" id="PRO_0000013461" description="Aryl hydrocarbon receptor">
    <location>
        <begin position="10"/>
        <end position="854"/>
    </location>
</feature>
<feature type="domain" description="bHLH" evidence="4">
    <location>
        <begin position="26"/>
        <end position="79"/>
    </location>
</feature>
<feature type="domain" description="PAS 1" evidence="3 6">
    <location>
        <begin position="111"/>
        <end position="175"/>
    </location>
</feature>
<feature type="domain" description="PAS 2" evidence="3 6">
    <location>
        <begin position="270"/>
        <end position="340"/>
    </location>
</feature>
<feature type="domain" description="PAC" evidence="6">
    <location>
        <begin position="346"/>
        <end position="387"/>
    </location>
</feature>
<feature type="region of interest" description="Disordered" evidence="5">
    <location>
        <begin position="1"/>
        <end position="38"/>
    </location>
</feature>
<feature type="region of interest" description="DNA-binding" evidence="2">
    <location>
        <begin position="37"/>
        <end position="65"/>
    </location>
</feature>
<feature type="region of interest" description="Required for maintaining the overall integrity of the AHR:ARNT heterodimer and its transcriptional activity" evidence="2">
    <location>
        <begin position="49"/>
        <end position="81"/>
    </location>
</feature>
<feature type="region of interest" description="Required for maintaining the overall integrity of the AHR:ARNT heterodimer and its transcriptional activity" evidence="1">
    <location>
        <begin position="116"/>
        <end position="124"/>
    </location>
</feature>
<feature type="region of interest" description="Required for maintaining the overall integrity of the AHR:ARNT heterodimer and its transcriptional activity" evidence="1">
    <location>
        <begin position="264"/>
        <end position="266"/>
    </location>
</feature>
<feature type="region of interest" description="Disordered" evidence="5">
    <location>
        <begin position="425"/>
        <end position="451"/>
    </location>
</feature>
<feature type="short sequence motif" description="Nuclear localization signal 1" evidence="2">
    <location>
        <begin position="12"/>
        <end position="15"/>
    </location>
</feature>
<feature type="short sequence motif" description="Nuclear localization signal 2" evidence="2">
    <location>
        <begin position="36"/>
        <end position="41"/>
    </location>
</feature>
<feature type="short sequence motif" description="Nuclear export signal" evidence="2">
    <location>
        <begin position="63"/>
        <end position="71"/>
    </location>
</feature>
<feature type="compositionally biased region" description="Polar residues" evidence="5">
    <location>
        <begin position="440"/>
        <end position="451"/>
    </location>
</feature>
<accession>Q8R4S4</accession>
<proteinExistence type="evidence at transcript level"/>
<name>AHR_MUSSI</name>
<sequence length="854" mass="95488">MSSGANITYASRKRRKPVQKTVKPIPAEGIKSNPSKRHRDRLNTELDRLASLLPFPQDVINKLDKLSVLRLSVSYLRAKSFFDVALKSTPADRNGGQDQCRAQIRDWQDLQEGEFLLQALNGFVLVVTADALVFYASSTIQDYLGFQQSDVIHQSVYELIHTEDRAEFQRQLHWALNPSQCTDSAQGVDEAHGPPQAAVYYTPDQLPPENASFMERCFRCRLRCLLDNSSGFLAMNFQGRLKYLHGQNKKGKDGALLPPQLALFAIATPLQPPSILEIRTKNFIFRTKHKLDFTPIGCDAKGQLILGYTEVELCTRGSGYQFIHAADMLHCAESHIRMIKTGESGMTVFRLLAKHSRWRWVQSNARLIYRNGRPDYIIATQRPLTDEEGREHLQKRSMSLPFMFATGEAVLYEISSPFSPIMDPLPIRTKSNTSRKDWAPQSTPSKDSFHPSSLMSALIQQDESIYLCPPSSPAPLDSHFLMGSVSKCGSWQDSFAATGSEAALKHEQIGHAQDVNLALSGGPSELFPDNKNNDLYSIMRNLGIDFEDIRSMQNEEFFRTDSTAAAAGEVDFKDIDITDEILTYVQDSLNNSTLLNSACQQQPVTQHLSCMLQERLQLEQQQQLQQPPPQALEPQQQLCQMVCPQQDLGPKHTQINGTFASWNPTPPVSFNCPQQELKHYQLFSSLQGTAQEFPYKPEVDSVPYTQNFAPCNQPLLPEHSKSVQLDFPGRDFEPSLHPTTSNLDFVSCLQVPENQSHGINSQSAMVSPQAYYAGAMSMYQCQPGPQRTPVDQTQYSSEIPGSQAFLSKVQSRGVFNETYSSDLSSIGHAAQTTGHLHHLAEAQPLPDITPGGFL</sequence>
<reference evidence="7" key="1">
    <citation type="journal article" date="2002" name="Pharmacogenetics">
        <title>Sequence variation and phylogenetic history of the mouse Ahr gene.</title>
        <authorList>
            <person name="Thomas R.S."/>
            <person name="Penn S.G."/>
            <person name="Holden K."/>
            <person name="Bradfield C.A."/>
            <person name="Rank D.R."/>
        </authorList>
    </citation>
    <scope>NUCLEOTIDE SEQUENCE [MRNA]</scope>
    <source>
        <strain>PANCEVO/Ei</strain>
    </source>
</reference>